<protein>
    <recommendedName>
        <fullName>Thiamine-binding periplasmic protein</fullName>
    </recommendedName>
</protein>
<organism>
    <name type="scientific">Brucella suis biovar 1 (strain 1330)</name>
    <dbReference type="NCBI Taxonomy" id="204722"/>
    <lineage>
        <taxon>Bacteria</taxon>
        <taxon>Pseudomonadati</taxon>
        <taxon>Pseudomonadota</taxon>
        <taxon>Alphaproteobacteria</taxon>
        <taxon>Hyphomicrobiales</taxon>
        <taxon>Brucellaceae</taxon>
        <taxon>Brucella/Ochrobactrum group</taxon>
        <taxon>Brucella</taxon>
    </lineage>
</organism>
<gene>
    <name type="primary">thiB</name>
    <name type="synonym">tbpA</name>
    <name type="ordered locus">BR1757</name>
    <name type="ordered locus">BS1330_I1751</name>
</gene>
<reference key="1">
    <citation type="journal article" date="2002" name="Proc. Natl. Acad. Sci. U.S.A.">
        <title>The Brucella suis genome reveals fundamental similarities between animal and plant pathogens and symbionts.</title>
        <authorList>
            <person name="Paulsen I.T."/>
            <person name="Seshadri R."/>
            <person name="Nelson K.E."/>
            <person name="Eisen J.A."/>
            <person name="Heidelberg J.F."/>
            <person name="Read T.D."/>
            <person name="Dodson R.J."/>
            <person name="Umayam L.A."/>
            <person name="Brinkac L.M."/>
            <person name="Beanan M.J."/>
            <person name="Daugherty S.C."/>
            <person name="DeBoy R.T."/>
            <person name="Durkin A.S."/>
            <person name="Kolonay J.F."/>
            <person name="Madupu R."/>
            <person name="Nelson W.C."/>
            <person name="Ayodeji B."/>
            <person name="Kraul M."/>
            <person name="Shetty J."/>
            <person name="Malek J.A."/>
            <person name="Van Aken S.E."/>
            <person name="Riedmuller S."/>
            <person name="Tettelin H."/>
            <person name="Gill S.R."/>
            <person name="White O."/>
            <person name="Salzberg S.L."/>
            <person name="Hoover D.L."/>
            <person name="Lindler L.E."/>
            <person name="Halling S.M."/>
            <person name="Boyle S.M."/>
            <person name="Fraser C.M."/>
        </authorList>
    </citation>
    <scope>NUCLEOTIDE SEQUENCE [LARGE SCALE GENOMIC DNA]</scope>
    <source>
        <strain>1330</strain>
    </source>
</reference>
<reference key="2">
    <citation type="journal article" date="2011" name="J. Bacteriol.">
        <title>Revised genome sequence of Brucella suis 1330.</title>
        <authorList>
            <person name="Tae H."/>
            <person name="Shallom S."/>
            <person name="Settlage R."/>
            <person name="Preston D."/>
            <person name="Adams L.G."/>
            <person name="Garner H.R."/>
        </authorList>
    </citation>
    <scope>NUCLEOTIDE SEQUENCE [LARGE SCALE GENOMIC DNA]</scope>
    <source>
        <strain>1330</strain>
    </source>
</reference>
<evidence type="ECO:0000250" key="1">
    <source>
        <dbReference type="UniProtKB" id="P31550"/>
    </source>
</evidence>
<evidence type="ECO:0000250" key="2">
    <source>
        <dbReference type="UniProtKB" id="Q7CR85"/>
    </source>
</evidence>
<evidence type="ECO:0000255" key="3"/>
<evidence type="ECO:0000305" key="4"/>
<accession>Q8FYV1</accession>
<accession>G0K797</accession>
<comment type="function">
    <text evidence="1">Part of the ABC transporter complex ThiBPQ involved in thiamine import.</text>
</comment>
<comment type="subunit">
    <text evidence="2">The complex is composed of two ATP-binding proteins (ThiQ), two transmembrane proteins (ThiP) and a solute-binding protein (ThiB).</text>
</comment>
<comment type="subcellular location">
    <subcellularLocation>
        <location evidence="1">Periplasm</location>
    </subcellularLocation>
</comment>
<comment type="similarity">
    <text evidence="4">Belongs to the bacterial solute-binding protein 1 family.</text>
</comment>
<sequence>MRLLSLLTFSLFAVIGLAPAAQAKDTLTIYTYDSFVSEWGPGPKVKENFEKECDCEVNFVASADGVALLNRLKLEGSKTAADIVLGLDTNLTTEARASGFFAPSGIDQTNVKVPGNFKDDIFVPYDYGYFAVVYDSEKLPNPPKSLKELVEGDPAQKIVLQDPRTATPGLGMLLWMKSVYGDEAGAAWQKLQKRVLTVTPGWSEAYGLFTKGESPMVLSYTTSPAYHMVVEKTDRYKALAYPEGNYLQIELAAQTTTGAKNPLAKKFLAFMTGPGFQDVIPETNWMFPAGKTSKPLPAAFDALPKPEKTLLIPPYEVAKNRRLWVNEWLAATSR</sequence>
<name>THIB_BRUSU</name>
<dbReference type="EMBL" id="AE014291">
    <property type="protein sequence ID" value="AAN30656.1"/>
    <property type="molecule type" value="Genomic_DNA"/>
</dbReference>
<dbReference type="EMBL" id="CP002997">
    <property type="protein sequence ID" value="AEM19073.1"/>
    <property type="molecule type" value="Genomic_DNA"/>
</dbReference>
<dbReference type="RefSeq" id="WP_006192518.1">
    <property type="nucleotide sequence ID" value="NZ_KN046804.1"/>
</dbReference>
<dbReference type="SMR" id="Q8FYV1"/>
<dbReference type="GeneID" id="45052724"/>
<dbReference type="KEGG" id="bms:BR1757"/>
<dbReference type="KEGG" id="bsi:BS1330_I1751"/>
<dbReference type="PATRIC" id="fig|204722.21.peg.1228"/>
<dbReference type="HOGENOM" id="CLU_026974_6_0_5"/>
<dbReference type="PhylomeDB" id="Q8FYV1"/>
<dbReference type="Proteomes" id="UP000007104">
    <property type="component" value="Chromosome I"/>
</dbReference>
<dbReference type="GO" id="GO:0030288">
    <property type="term" value="C:outer membrane-bounded periplasmic space"/>
    <property type="evidence" value="ECO:0007669"/>
    <property type="project" value="InterPro"/>
</dbReference>
<dbReference type="GO" id="GO:0030975">
    <property type="term" value="F:thiamine binding"/>
    <property type="evidence" value="ECO:0007669"/>
    <property type="project" value="InterPro"/>
</dbReference>
<dbReference type="GO" id="GO:0030976">
    <property type="term" value="F:thiamine pyrophosphate binding"/>
    <property type="evidence" value="ECO:0007669"/>
    <property type="project" value="TreeGrafter"/>
</dbReference>
<dbReference type="GO" id="GO:0015888">
    <property type="term" value="P:thiamine transport"/>
    <property type="evidence" value="ECO:0007669"/>
    <property type="project" value="InterPro"/>
</dbReference>
<dbReference type="CDD" id="cd13545">
    <property type="entry name" value="PBP2_TbpA"/>
    <property type="match status" value="1"/>
</dbReference>
<dbReference type="Gene3D" id="3.40.190.10">
    <property type="entry name" value="Periplasmic binding protein-like II"/>
    <property type="match status" value="2"/>
</dbReference>
<dbReference type="InterPro" id="IPR006059">
    <property type="entry name" value="SBP"/>
</dbReference>
<dbReference type="InterPro" id="IPR005967">
    <property type="entry name" value="ThiB"/>
</dbReference>
<dbReference type="InterPro" id="IPR005948">
    <property type="entry name" value="ThiB-like"/>
</dbReference>
<dbReference type="NCBIfam" id="TIGR01254">
    <property type="entry name" value="sfuA"/>
    <property type="match status" value="1"/>
</dbReference>
<dbReference type="NCBIfam" id="TIGR01276">
    <property type="entry name" value="thiB"/>
    <property type="match status" value="1"/>
</dbReference>
<dbReference type="PANTHER" id="PTHR30006:SF3">
    <property type="entry name" value="THIAMINE-BINDING PERIPLASMIC PROTEIN"/>
    <property type="match status" value="1"/>
</dbReference>
<dbReference type="PANTHER" id="PTHR30006">
    <property type="entry name" value="THIAMINE-BINDING PERIPLASMIC PROTEIN-RELATED"/>
    <property type="match status" value="1"/>
</dbReference>
<dbReference type="Pfam" id="PF01547">
    <property type="entry name" value="SBP_bac_1"/>
    <property type="match status" value="1"/>
</dbReference>
<dbReference type="SUPFAM" id="SSF53850">
    <property type="entry name" value="Periplasmic binding protein-like II"/>
    <property type="match status" value="1"/>
</dbReference>
<keyword id="KW-0574">Periplasm</keyword>
<keyword id="KW-0732">Signal</keyword>
<keyword id="KW-0813">Transport</keyword>
<proteinExistence type="inferred from homology"/>
<feature type="signal peptide" evidence="3">
    <location>
        <begin position="1"/>
        <end position="23"/>
    </location>
</feature>
<feature type="chain" id="PRO_0000282914" description="Thiamine-binding periplasmic protein">
    <location>
        <begin position="24"/>
        <end position="334"/>
    </location>
</feature>
<feature type="binding site" evidence="1">
    <location>
        <begin position="64"/>
        <end position="65"/>
    </location>
    <ligand>
        <name>thiamine</name>
        <dbReference type="ChEBI" id="CHEBI:18385"/>
    </ligand>
</feature>
<feature type="binding site" evidence="1">
    <location>
        <begin position="166"/>
        <end position="167"/>
    </location>
    <ligand>
        <name>thiamine</name>
        <dbReference type="ChEBI" id="CHEBI:18385"/>
    </ligand>
</feature>
<feature type="binding site" evidence="1">
    <location>
        <position position="202"/>
    </location>
    <ligand>
        <name>thiamine</name>
        <dbReference type="ChEBI" id="CHEBI:18385"/>
    </ligand>
</feature>
<feature type="binding site" evidence="1">
    <location>
        <begin position="220"/>
        <end position="223"/>
    </location>
    <ligand>
        <name>thiamine</name>
        <dbReference type="ChEBI" id="CHEBI:18385"/>
    </ligand>
</feature>